<reference key="1">
    <citation type="journal article" date="2005" name="Nature">
        <title>The genome of the social amoeba Dictyostelium discoideum.</title>
        <authorList>
            <person name="Eichinger L."/>
            <person name="Pachebat J.A."/>
            <person name="Gloeckner G."/>
            <person name="Rajandream M.A."/>
            <person name="Sucgang R."/>
            <person name="Berriman M."/>
            <person name="Song J."/>
            <person name="Olsen R."/>
            <person name="Szafranski K."/>
            <person name="Xu Q."/>
            <person name="Tunggal B."/>
            <person name="Kummerfeld S."/>
            <person name="Madera M."/>
            <person name="Konfortov B.A."/>
            <person name="Rivero F."/>
            <person name="Bankier A.T."/>
            <person name="Lehmann R."/>
            <person name="Hamlin N."/>
            <person name="Davies R."/>
            <person name="Gaudet P."/>
            <person name="Fey P."/>
            <person name="Pilcher K."/>
            <person name="Chen G."/>
            <person name="Saunders D."/>
            <person name="Sodergren E.J."/>
            <person name="Davis P."/>
            <person name="Kerhornou A."/>
            <person name="Nie X."/>
            <person name="Hall N."/>
            <person name="Anjard C."/>
            <person name="Hemphill L."/>
            <person name="Bason N."/>
            <person name="Farbrother P."/>
            <person name="Desany B."/>
            <person name="Just E."/>
            <person name="Morio T."/>
            <person name="Rost R."/>
            <person name="Churcher C.M."/>
            <person name="Cooper J."/>
            <person name="Haydock S."/>
            <person name="van Driessche N."/>
            <person name="Cronin A."/>
            <person name="Goodhead I."/>
            <person name="Muzny D.M."/>
            <person name="Mourier T."/>
            <person name="Pain A."/>
            <person name="Lu M."/>
            <person name="Harper D."/>
            <person name="Lindsay R."/>
            <person name="Hauser H."/>
            <person name="James K.D."/>
            <person name="Quiles M."/>
            <person name="Madan Babu M."/>
            <person name="Saito T."/>
            <person name="Buchrieser C."/>
            <person name="Wardroper A."/>
            <person name="Felder M."/>
            <person name="Thangavelu M."/>
            <person name="Johnson D."/>
            <person name="Knights A."/>
            <person name="Loulseged H."/>
            <person name="Mungall K.L."/>
            <person name="Oliver K."/>
            <person name="Price C."/>
            <person name="Quail M.A."/>
            <person name="Urushihara H."/>
            <person name="Hernandez J."/>
            <person name="Rabbinowitsch E."/>
            <person name="Steffen D."/>
            <person name="Sanders M."/>
            <person name="Ma J."/>
            <person name="Kohara Y."/>
            <person name="Sharp S."/>
            <person name="Simmonds M.N."/>
            <person name="Spiegler S."/>
            <person name="Tivey A."/>
            <person name="Sugano S."/>
            <person name="White B."/>
            <person name="Walker D."/>
            <person name="Woodward J.R."/>
            <person name="Winckler T."/>
            <person name="Tanaka Y."/>
            <person name="Shaulsky G."/>
            <person name="Schleicher M."/>
            <person name="Weinstock G.M."/>
            <person name="Rosenthal A."/>
            <person name="Cox E.C."/>
            <person name="Chisholm R.L."/>
            <person name="Gibbs R.A."/>
            <person name="Loomis W.F."/>
            <person name="Platzer M."/>
            <person name="Kay R.R."/>
            <person name="Williams J.G."/>
            <person name="Dear P.H."/>
            <person name="Noegel A.A."/>
            <person name="Barrell B.G."/>
            <person name="Kuspa A."/>
        </authorList>
    </citation>
    <scope>NUCLEOTIDE SEQUENCE [LARGE SCALE GENOMIC DNA]</scope>
    <source>
        <strain>AX4</strain>
    </source>
</reference>
<reference key="2">
    <citation type="journal article" date="2007" name="Mol. Biol. Cell">
        <title>The N-terminus of Dictyostelium Scar interacts with Abi and HSPC300 and is essential for proper regulation and function.</title>
        <authorList>
            <person name="Caracino D."/>
            <person name="Jones C."/>
            <person name="Compton M."/>
            <person name="Saxe C.L. III"/>
        </authorList>
    </citation>
    <scope>IDENTIFICATION IN THE WAVE COMPLEX</scope>
    <scope>INTERACTION WITH SCRA</scope>
    <scope>FUNCTION</scope>
</reference>
<reference key="3">
    <citation type="journal article" date="2008" name="Curr. Biol.">
        <title>Abi mutants in Dictyostelium reveal specific roles for the SCAR/WAVE complex in cytokinesis.</title>
        <authorList>
            <person name="Pollitt A.Y."/>
            <person name="Insall R.H."/>
        </authorList>
    </citation>
    <scope>IDENTIFICATION IN THE WAVE COMPLEX</scope>
    <scope>DISRUPTION PHENOTYPE</scope>
    <scope>FUNCTION</scope>
</reference>
<gene>
    <name type="primary">abiA</name>
    <name type="ORF">DDB_G0267956</name>
</gene>
<proteinExistence type="evidence at protein level"/>
<comment type="function">
    <text evidence="3 4">Involved in regulation of actin and microtubule organization. Required for proper cytokinesis.</text>
</comment>
<comment type="subunit">
    <text evidence="3 4">Part of a Scar/WAVE complex containing brk1, scrA, abiA, pirA and napA. Interacts with scrA.</text>
</comment>
<comment type="interaction">
    <interactant intactId="EBI-1808197">
        <id>Q55FT9</id>
    </interactant>
    <interactant intactId="EBI-1808146">
        <id>Q54NF8</id>
        <label>scrA</label>
    </interactant>
    <organismsDiffer>false</organismsDiffer>
    <experiments>3</experiments>
</comment>
<comment type="disruption phenotype">
    <text evidence="4">Cells show no developmental defects, mild motility defects and serious defects in cytokinesis.</text>
</comment>
<comment type="similarity">
    <text evidence="5">Belongs to the ABI family.</text>
</comment>
<feature type="chain" id="PRO_0000331387" description="Abl interactor homolog">
    <location>
        <begin position="1"/>
        <end position="332"/>
    </location>
</feature>
<feature type="region of interest" description="Disordered" evidence="2">
    <location>
        <begin position="152"/>
        <end position="332"/>
    </location>
</feature>
<feature type="coiled-coil region" evidence="1">
    <location>
        <begin position="73"/>
        <end position="104"/>
    </location>
</feature>
<feature type="compositionally biased region" description="Low complexity" evidence="2">
    <location>
        <begin position="164"/>
        <end position="206"/>
    </location>
</feature>
<feature type="compositionally biased region" description="Pro residues" evidence="2">
    <location>
        <begin position="221"/>
        <end position="247"/>
    </location>
</feature>
<feature type="compositionally biased region" description="Polar residues" evidence="2">
    <location>
        <begin position="248"/>
        <end position="257"/>
    </location>
</feature>
<feature type="compositionally biased region" description="Pro residues" evidence="2">
    <location>
        <begin position="277"/>
        <end position="314"/>
    </location>
</feature>
<sequence length="332" mass="35313">MSESIDINVYSQTTIPNAMAELMDNHNKMEQISAYCKSLYANGDAAQAYEQTQGYAKNALLNVAYHIQTVGTHITSLLQLQTNEMEKLNIEIQTLTQRVRMIHDSTGTNVFSNQDAAKPYKSSLKNRKVDTEATKAPVKYVHKPISYGISASDINQNGVPPPLNHSNSSANLTSSSGHLAASSTSNSSTPSYQSPSYSSQPTISSGTPPPIQKQPPRVGNAPPPPSLSVPAAPPPPVMNVPPPPPTSQRPSSVNNNAPSNDFPPPPPPSSSSSGGDLPPPPSFGLPPPPTLGDDFPPPPPPPVGSYDFPPPPARPQSQFYDHNDFPPPPPPM</sequence>
<accession>Q55FT9</accession>
<organism>
    <name type="scientific">Dictyostelium discoideum</name>
    <name type="common">Social amoeba</name>
    <dbReference type="NCBI Taxonomy" id="44689"/>
    <lineage>
        <taxon>Eukaryota</taxon>
        <taxon>Amoebozoa</taxon>
        <taxon>Evosea</taxon>
        <taxon>Eumycetozoa</taxon>
        <taxon>Dictyostelia</taxon>
        <taxon>Dictyosteliales</taxon>
        <taxon>Dictyosteliaceae</taxon>
        <taxon>Dictyostelium</taxon>
    </lineage>
</organism>
<keyword id="KW-0131">Cell cycle</keyword>
<keyword id="KW-0132">Cell division</keyword>
<keyword id="KW-0175">Coiled coil</keyword>
<keyword id="KW-1185">Reference proteome</keyword>
<evidence type="ECO:0000255" key="1"/>
<evidence type="ECO:0000256" key="2">
    <source>
        <dbReference type="SAM" id="MobiDB-lite"/>
    </source>
</evidence>
<evidence type="ECO:0000269" key="3">
    <source>
    </source>
</evidence>
<evidence type="ECO:0000269" key="4">
    <source>
    </source>
</evidence>
<evidence type="ECO:0000305" key="5"/>
<protein>
    <recommendedName>
        <fullName>Abl interactor homolog</fullName>
    </recommendedName>
</protein>
<dbReference type="EMBL" id="AAFI02000003">
    <property type="protein sequence ID" value="EAL73431.1"/>
    <property type="molecule type" value="Genomic_DNA"/>
</dbReference>
<dbReference type="RefSeq" id="XP_647444.1">
    <property type="nucleotide sequence ID" value="XM_642352.1"/>
</dbReference>
<dbReference type="SMR" id="Q55FT9"/>
<dbReference type="FunCoup" id="Q55FT9">
    <property type="interactions" value="1"/>
</dbReference>
<dbReference type="IntAct" id="Q55FT9">
    <property type="interactions" value="2"/>
</dbReference>
<dbReference type="STRING" id="44689.Q55FT9"/>
<dbReference type="GlyGen" id="Q55FT9">
    <property type="glycosylation" value="1 site"/>
</dbReference>
<dbReference type="PaxDb" id="44689-DDB0231426"/>
<dbReference type="EnsemblProtists" id="EAL73431">
    <property type="protein sequence ID" value="EAL73431"/>
    <property type="gene ID" value="DDB_G0267956"/>
</dbReference>
<dbReference type="GeneID" id="8616251"/>
<dbReference type="KEGG" id="ddi:DDB_G0267956"/>
<dbReference type="dictyBase" id="DDB_G0267956">
    <property type="gene designation" value="abiA"/>
</dbReference>
<dbReference type="VEuPathDB" id="AmoebaDB:DDB_G0267956"/>
<dbReference type="eggNOG" id="KOG2546">
    <property type="taxonomic scope" value="Eukaryota"/>
</dbReference>
<dbReference type="HOGENOM" id="CLU_837893_0_0_1"/>
<dbReference type="InParanoid" id="Q55FT9"/>
<dbReference type="OMA" id="NVAYHIQ"/>
<dbReference type="Reactome" id="R-DDI-2029482">
    <property type="pathway name" value="Regulation of actin dynamics for phagocytic cup formation"/>
</dbReference>
<dbReference type="Reactome" id="R-DDI-5663213">
    <property type="pathway name" value="RHO GTPases Activate WASPs and WAVEs"/>
</dbReference>
<dbReference type="Reactome" id="R-DDI-9013149">
    <property type="pathway name" value="RAC1 GTPase cycle"/>
</dbReference>
<dbReference type="Reactome" id="R-DDI-9013404">
    <property type="pathway name" value="RAC2 GTPase cycle"/>
</dbReference>
<dbReference type="Reactome" id="R-DDI-9013423">
    <property type="pathway name" value="RAC3 GTPase cycle"/>
</dbReference>
<dbReference type="PRO" id="PR:Q55FT9"/>
<dbReference type="Proteomes" id="UP000002195">
    <property type="component" value="Chromosome 1"/>
</dbReference>
<dbReference type="GO" id="GO:0098858">
    <property type="term" value="C:actin-based cell projection"/>
    <property type="evidence" value="ECO:0000318"/>
    <property type="project" value="GO_Central"/>
</dbReference>
<dbReference type="GO" id="GO:0031252">
    <property type="term" value="C:cell leading edge"/>
    <property type="evidence" value="ECO:0000305"/>
    <property type="project" value="dictyBase"/>
</dbReference>
<dbReference type="GO" id="GO:0005911">
    <property type="term" value="C:cell-cell junction"/>
    <property type="evidence" value="ECO:0000305"/>
    <property type="project" value="dictyBase"/>
</dbReference>
<dbReference type="GO" id="GO:0032433">
    <property type="term" value="C:filopodium tip"/>
    <property type="evidence" value="ECO:0000305"/>
    <property type="project" value="dictyBase"/>
</dbReference>
<dbReference type="GO" id="GO:0030027">
    <property type="term" value="C:lamellipodium"/>
    <property type="evidence" value="ECO:0000318"/>
    <property type="project" value="GO_Central"/>
</dbReference>
<dbReference type="GO" id="GO:0031143">
    <property type="term" value="C:pseudopodium"/>
    <property type="evidence" value="ECO:0000305"/>
    <property type="project" value="dictyBase"/>
</dbReference>
<dbReference type="GO" id="GO:0031209">
    <property type="term" value="C:SCAR complex"/>
    <property type="evidence" value="ECO:0000314"/>
    <property type="project" value="dictyBase"/>
</dbReference>
<dbReference type="GO" id="GO:0035591">
    <property type="term" value="F:signaling adaptor activity"/>
    <property type="evidence" value="ECO:0000318"/>
    <property type="project" value="GO_Central"/>
</dbReference>
<dbReference type="GO" id="GO:0048870">
    <property type="term" value="P:cell motility"/>
    <property type="evidence" value="ECO:0000315"/>
    <property type="project" value="dictyBase"/>
</dbReference>
<dbReference type="GO" id="GO:0043326">
    <property type="term" value="P:chemotaxis to folate"/>
    <property type="evidence" value="ECO:0000315"/>
    <property type="project" value="dictyBase"/>
</dbReference>
<dbReference type="GO" id="GO:0045184">
    <property type="term" value="P:establishment of protein localization"/>
    <property type="evidence" value="ECO:0000315"/>
    <property type="project" value="dictyBase"/>
</dbReference>
<dbReference type="GO" id="GO:0046847">
    <property type="term" value="P:filopodium assembly"/>
    <property type="evidence" value="ECO:0000315"/>
    <property type="project" value="dictyBase"/>
</dbReference>
<dbReference type="GO" id="GO:0000281">
    <property type="term" value="P:mitotic cytokinesis"/>
    <property type="evidence" value="ECO:0000315"/>
    <property type="project" value="dictyBase"/>
</dbReference>
<dbReference type="GO" id="GO:0031269">
    <property type="term" value="P:pseudopodium assembly"/>
    <property type="evidence" value="ECO:0000315"/>
    <property type="project" value="dictyBase"/>
</dbReference>
<dbReference type="GO" id="GO:0030587">
    <property type="term" value="P:sorocarp development"/>
    <property type="evidence" value="ECO:0000315"/>
    <property type="project" value="dictyBase"/>
</dbReference>
<dbReference type="Gene3D" id="6.10.140.1620">
    <property type="match status" value="1"/>
</dbReference>
<dbReference type="InterPro" id="IPR028457">
    <property type="entry name" value="ABI"/>
</dbReference>
<dbReference type="PANTHER" id="PTHR10460:SF0">
    <property type="entry name" value="ABELSON INTERACTING PROTEIN, ISOFORM D"/>
    <property type="match status" value="1"/>
</dbReference>
<dbReference type="PANTHER" id="PTHR10460">
    <property type="entry name" value="ABL INTERACTOR FAMILY MEMBER"/>
    <property type="match status" value="1"/>
</dbReference>
<dbReference type="PRINTS" id="PR01217">
    <property type="entry name" value="PRICHEXTENSN"/>
</dbReference>
<name>ABIA_DICDI</name>